<accession>A7ZWA8</accession>
<gene>
    <name evidence="1" type="primary">dgt</name>
    <name type="ordered locus">EcHS_A0164</name>
</gene>
<keyword id="KW-0378">Hydrolase</keyword>
<keyword id="KW-0460">Magnesium</keyword>
<name>DGTP_ECOHS</name>
<reference key="1">
    <citation type="journal article" date="2008" name="J. Bacteriol.">
        <title>The pangenome structure of Escherichia coli: comparative genomic analysis of E. coli commensal and pathogenic isolates.</title>
        <authorList>
            <person name="Rasko D.A."/>
            <person name="Rosovitz M.J."/>
            <person name="Myers G.S.A."/>
            <person name="Mongodin E.F."/>
            <person name="Fricke W.F."/>
            <person name="Gajer P."/>
            <person name="Crabtree J."/>
            <person name="Sebaihia M."/>
            <person name="Thomson N.R."/>
            <person name="Chaudhuri R."/>
            <person name="Henderson I.R."/>
            <person name="Sperandio V."/>
            <person name="Ravel J."/>
        </authorList>
    </citation>
    <scope>NUCLEOTIDE SEQUENCE [LARGE SCALE GENOMIC DNA]</scope>
    <source>
        <strain>HS</strain>
    </source>
</reference>
<protein>
    <recommendedName>
        <fullName evidence="1">Deoxyguanosinetriphosphate triphosphohydrolase</fullName>
        <shortName evidence="1">dGTP triphosphohydrolase</shortName>
        <shortName evidence="1">dGTPase</shortName>
        <ecNumber evidence="1">3.1.5.1</ecNumber>
    </recommendedName>
</protein>
<feature type="chain" id="PRO_1000057228" description="Deoxyguanosinetriphosphate triphosphohydrolase">
    <location>
        <begin position="1"/>
        <end position="505"/>
    </location>
</feature>
<feature type="domain" description="HD" evidence="2">
    <location>
        <begin position="66"/>
        <end position="273"/>
    </location>
</feature>
<comment type="function">
    <text evidence="1">dGTPase preferentially hydrolyzes dGTP over the other canonical NTPs.</text>
</comment>
<comment type="catalytic activity">
    <reaction evidence="1">
        <text>dGTP + H2O = 2'-deoxyguanosine + triphosphate + H(+)</text>
        <dbReference type="Rhea" id="RHEA:15193"/>
        <dbReference type="ChEBI" id="CHEBI:15377"/>
        <dbReference type="ChEBI" id="CHEBI:15378"/>
        <dbReference type="ChEBI" id="CHEBI:17172"/>
        <dbReference type="ChEBI" id="CHEBI:18036"/>
        <dbReference type="ChEBI" id="CHEBI:61429"/>
        <dbReference type="EC" id="3.1.5.1"/>
    </reaction>
</comment>
<comment type="cofactor">
    <cofactor evidence="1">
        <name>Mg(2+)</name>
        <dbReference type="ChEBI" id="CHEBI:18420"/>
    </cofactor>
</comment>
<comment type="subunit">
    <text evidence="1">Homotetramer.</text>
</comment>
<comment type="similarity">
    <text evidence="1">Belongs to the dGTPase family. Type 1 subfamily.</text>
</comment>
<evidence type="ECO:0000255" key="1">
    <source>
        <dbReference type="HAMAP-Rule" id="MF_00030"/>
    </source>
</evidence>
<evidence type="ECO:0000255" key="2">
    <source>
        <dbReference type="PROSITE-ProRule" id="PRU01175"/>
    </source>
</evidence>
<sequence length="505" mass="59355">MAQIDFRKKINWHRRYRSPQGVKTEHEILRIFESDRGRIINSPAIRRLQQKTQVFPLERNAAVRTRLTHSMEVQQVGRYIAKEILSRLKELKLLEAYGLDELTGPFESIVEMSCLMHDIGNPPFGHFGEAAINDWFRQRLHPEDAESQPLTDDRCSVAALRLRDGEEPLNELRRKIRQDLCHFEGNAQGIRLVHTLMRMNLTWAQVGGILKYTRPAWWRGETPETHHYLMKKPGYYLSEEAYIARLRKELNLALYSRFPLTWIMEAADDISYCVADLEDAVEKRIFTVEQLYHHLHEAWGQHEKGSLFSLVVENAWEKSRSNSLSRSTEDQFFMYLRVNTLNKLVPYAAQRFIDNLPAIFAGTFNHALLEDASECSDLLKLYKNVAVKHVFSHPDVEQLELQGYRVISGLLEIYRPLLSLSLSDFTELVEKERVKRFPIESRLFHKLSTRHRLAYVEAVSKLPSDSPEFPLWEYYYRCRLLQDYISGMTDLYAWDEYRRLMAVEQ</sequence>
<proteinExistence type="inferred from homology"/>
<dbReference type="EC" id="3.1.5.1" evidence="1"/>
<dbReference type="EMBL" id="CP000802">
    <property type="protein sequence ID" value="ABV04562.1"/>
    <property type="molecule type" value="Genomic_DNA"/>
</dbReference>
<dbReference type="RefSeq" id="WP_000057067.1">
    <property type="nucleotide sequence ID" value="NC_009800.1"/>
</dbReference>
<dbReference type="SMR" id="A7ZWA8"/>
<dbReference type="KEGG" id="ecx:EcHS_A0164"/>
<dbReference type="HOGENOM" id="CLU_028163_2_1_6"/>
<dbReference type="GO" id="GO:0008832">
    <property type="term" value="F:dGTPase activity"/>
    <property type="evidence" value="ECO:0007669"/>
    <property type="project" value="UniProtKB-UniRule"/>
</dbReference>
<dbReference type="GO" id="GO:0000287">
    <property type="term" value="F:magnesium ion binding"/>
    <property type="evidence" value="ECO:0007669"/>
    <property type="project" value="UniProtKB-UniRule"/>
</dbReference>
<dbReference type="GO" id="GO:0006203">
    <property type="term" value="P:dGTP catabolic process"/>
    <property type="evidence" value="ECO:0007669"/>
    <property type="project" value="InterPro"/>
</dbReference>
<dbReference type="CDD" id="cd00077">
    <property type="entry name" value="HDc"/>
    <property type="match status" value="1"/>
</dbReference>
<dbReference type="FunFam" id="1.10.3210.10:FF:000009">
    <property type="entry name" value="Deoxyguanosinetriphosphate triphosphohydrolase"/>
    <property type="match status" value="1"/>
</dbReference>
<dbReference type="FunFam" id="1.10.3210.10:FF:000010">
    <property type="entry name" value="Deoxyguanosinetriphosphate triphosphohydrolase"/>
    <property type="match status" value="1"/>
</dbReference>
<dbReference type="FunFam" id="1.10.3410.10:FF:000001">
    <property type="entry name" value="Deoxyguanosinetriphosphate triphosphohydrolase"/>
    <property type="match status" value="1"/>
</dbReference>
<dbReference type="Gene3D" id="1.10.3210.10">
    <property type="entry name" value="Hypothetical protein af1432"/>
    <property type="match status" value="2"/>
</dbReference>
<dbReference type="Gene3D" id="1.10.3410.10">
    <property type="entry name" value="putative deoxyguanosinetriphosphate triphosphohydrolase like domain"/>
    <property type="match status" value="1"/>
</dbReference>
<dbReference type="HAMAP" id="MF_00030">
    <property type="entry name" value="dGTPase_type1"/>
    <property type="match status" value="1"/>
</dbReference>
<dbReference type="InterPro" id="IPR023293">
    <property type="entry name" value="dGTP_triP_hydro_central_sf"/>
</dbReference>
<dbReference type="InterPro" id="IPR006261">
    <property type="entry name" value="dGTPase"/>
</dbReference>
<dbReference type="InterPro" id="IPR050135">
    <property type="entry name" value="dGTPase-like"/>
</dbReference>
<dbReference type="InterPro" id="IPR020779">
    <property type="entry name" value="dNTPase_1"/>
</dbReference>
<dbReference type="InterPro" id="IPR003607">
    <property type="entry name" value="HD/PDEase_dom"/>
</dbReference>
<dbReference type="InterPro" id="IPR006674">
    <property type="entry name" value="HD_domain"/>
</dbReference>
<dbReference type="NCBIfam" id="TIGR01353">
    <property type="entry name" value="dGTP_triPase"/>
    <property type="match status" value="1"/>
</dbReference>
<dbReference type="NCBIfam" id="NF003429">
    <property type="entry name" value="PRK04926.1"/>
    <property type="match status" value="1"/>
</dbReference>
<dbReference type="PANTHER" id="PTHR11373:SF32">
    <property type="entry name" value="DEOXYGUANOSINETRIPHOSPHATE TRIPHOSPHOHYDROLASE"/>
    <property type="match status" value="1"/>
</dbReference>
<dbReference type="PANTHER" id="PTHR11373">
    <property type="entry name" value="DEOXYNUCLEOSIDE TRIPHOSPHATE TRIPHOSPHOHYDROLASE"/>
    <property type="match status" value="1"/>
</dbReference>
<dbReference type="Pfam" id="PF01966">
    <property type="entry name" value="HD"/>
    <property type="match status" value="1"/>
</dbReference>
<dbReference type="SMART" id="SM00471">
    <property type="entry name" value="HDc"/>
    <property type="match status" value="1"/>
</dbReference>
<dbReference type="SUPFAM" id="SSF109604">
    <property type="entry name" value="HD-domain/PDEase-like"/>
    <property type="match status" value="1"/>
</dbReference>
<dbReference type="PROSITE" id="PS51831">
    <property type="entry name" value="HD"/>
    <property type="match status" value="1"/>
</dbReference>
<organism>
    <name type="scientific">Escherichia coli O9:H4 (strain HS)</name>
    <dbReference type="NCBI Taxonomy" id="331112"/>
    <lineage>
        <taxon>Bacteria</taxon>
        <taxon>Pseudomonadati</taxon>
        <taxon>Pseudomonadota</taxon>
        <taxon>Gammaproteobacteria</taxon>
        <taxon>Enterobacterales</taxon>
        <taxon>Enterobacteriaceae</taxon>
        <taxon>Escherichia</taxon>
    </lineage>
</organism>